<dbReference type="SMR" id="P85244"/>
<dbReference type="GO" id="GO:0006952">
    <property type="term" value="P:defense response"/>
    <property type="evidence" value="ECO:0007669"/>
    <property type="project" value="UniProtKB-KW"/>
</dbReference>
<dbReference type="InterPro" id="IPR005535">
    <property type="entry name" value="Cyclotide"/>
</dbReference>
<dbReference type="InterPro" id="IPR012323">
    <property type="entry name" value="Cyclotide_bracelet_CS"/>
</dbReference>
<dbReference type="InterPro" id="IPR036146">
    <property type="entry name" value="Cyclotide_sf"/>
</dbReference>
<dbReference type="Pfam" id="PF03784">
    <property type="entry name" value="Cyclotide"/>
    <property type="match status" value="1"/>
</dbReference>
<dbReference type="PIRSF" id="PIRSF037891">
    <property type="entry name" value="Cycloviolacin"/>
    <property type="match status" value="1"/>
</dbReference>
<dbReference type="SUPFAM" id="SSF57038">
    <property type="entry name" value="Cyclotides"/>
    <property type="match status" value="1"/>
</dbReference>
<dbReference type="PROSITE" id="PS51052">
    <property type="entry name" value="CYCLOTIDE"/>
    <property type="match status" value="1"/>
</dbReference>
<dbReference type="PROSITE" id="PS60008">
    <property type="entry name" value="CYCLOTIDE_BRACELET"/>
    <property type="match status" value="1"/>
</dbReference>
<evidence type="ECO:0000250" key="1">
    <source>
        <dbReference type="UniProtKB" id="P82230"/>
    </source>
</evidence>
<evidence type="ECO:0000255" key="2">
    <source>
        <dbReference type="PROSITE-ProRule" id="PRU00395"/>
    </source>
</evidence>
<evidence type="ECO:0000269" key="3">
    <source>
    </source>
</evidence>
<evidence type="ECO:0000305" key="4"/>
<proteinExistence type="evidence at protein level"/>
<reference evidence="4" key="1">
    <citation type="journal article" date="2008" name="Phytochemistry">
        <title>The alpine violet, Viola biflora, is a rich source of cyclotides with potent cytotoxicity.</title>
        <authorList>
            <person name="Herrmann A."/>
            <person name="Burman R."/>
            <person name="Mylne J.S."/>
            <person name="Karlsson G."/>
            <person name="Gullbo J."/>
            <person name="Craik D.J."/>
            <person name="Clark R.J."/>
            <person name="Goeransson U."/>
        </authorList>
    </citation>
    <scope>PROTEIN SEQUENCE</scope>
    <scope>MASS SPECTROMETRY</scope>
</reference>
<keyword id="KW-0903">Direct protein sequencing</keyword>
<keyword id="KW-1015">Disulfide bond</keyword>
<keyword id="KW-0960">Knottin</keyword>
<keyword id="KW-0611">Plant defense</keyword>
<organism>
    <name type="scientific">Viola biflora</name>
    <name type="common">Yellow wood violet</name>
    <dbReference type="NCBI Taxonomy" id="214529"/>
    <lineage>
        <taxon>Eukaryota</taxon>
        <taxon>Viridiplantae</taxon>
        <taxon>Streptophyta</taxon>
        <taxon>Embryophyta</taxon>
        <taxon>Tracheophyta</taxon>
        <taxon>Spermatophyta</taxon>
        <taxon>Magnoliopsida</taxon>
        <taxon>eudicotyledons</taxon>
        <taxon>Gunneridae</taxon>
        <taxon>Pentapetalae</taxon>
        <taxon>rosids</taxon>
        <taxon>fabids</taxon>
        <taxon>Malpighiales</taxon>
        <taxon>Violaceae</taxon>
        <taxon>Viola</taxon>
        <taxon>Viola subgen. Viola</taxon>
        <taxon>Viola sect. Chamaemelanium</taxon>
    </lineage>
</organism>
<comment type="function">
    <text evidence="4">Probably participates in a plant defense mechanism.</text>
</comment>
<comment type="domain">
    <text evidence="1">The presence of a 'disulfide through disulfide knot' structurally defines this protein as a knottin.</text>
</comment>
<comment type="PTM">
    <text evidence="2 3">This is a cyclic peptide.</text>
</comment>
<comment type="mass spectrometry" mass="3188.0" method="Electrospray" evidence="3"/>
<comment type="similarity">
    <text evidence="2">Belongs to the cyclotide family. Bracelet subfamily.</text>
</comment>
<comment type="caution">
    <text evidence="4">This peptide is cyclic. The start position was chosen by similarity to OAK1 (kalata-B1) for which the DNA sequence is known.</text>
</comment>
<accession>P85244</accession>
<feature type="peptide" id="PRO_0000341428" description="Cyclotide vibi-F">
    <location>
        <begin position="1"/>
        <end position="31"/>
    </location>
</feature>
<feature type="disulfide bond" evidence="1 2">
    <location>
        <begin position="5"/>
        <end position="21"/>
    </location>
</feature>
<feature type="disulfide bond" evidence="1 2">
    <location>
        <begin position="9"/>
        <end position="23"/>
    </location>
</feature>
<feature type="disulfide bond" evidence="1 2">
    <location>
        <begin position="14"/>
        <end position="28"/>
    </location>
</feature>
<feature type="cross-link" description="Cyclopeptide (Gly-Asn)" evidence="3">
    <location>
        <begin position="1"/>
        <end position="31"/>
    </location>
</feature>
<name>CYVF_VIOBI</name>
<sequence length="31" mass="3213">GTIPCGESCVFIPCLTSALGCSCKSKVCYKN</sequence>
<protein>
    <recommendedName>
        <fullName>Cyclotide vibi-F</fullName>
    </recommendedName>
</protein>